<organism>
    <name type="scientific">Methanocaldococcus jannaschii (strain ATCC 43067 / DSM 2661 / JAL-1 / JCM 10045 / NBRC 100440)</name>
    <name type="common">Methanococcus jannaschii</name>
    <dbReference type="NCBI Taxonomy" id="243232"/>
    <lineage>
        <taxon>Archaea</taxon>
        <taxon>Methanobacteriati</taxon>
        <taxon>Methanobacteriota</taxon>
        <taxon>Methanomada group</taxon>
        <taxon>Methanococci</taxon>
        <taxon>Methanococcales</taxon>
        <taxon>Methanocaldococcaceae</taxon>
        <taxon>Methanocaldococcus</taxon>
    </lineage>
</organism>
<feature type="chain" id="PRO_0000106718" description="Uncharacterized protein MJ0144">
    <location>
        <begin position="1"/>
        <end position="258"/>
    </location>
</feature>
<reference key="1">
    <citation type="journal article" date="1996" name="Science">
        <title>Complete genome sequence of the methanogenic archaeon, Methanococcus jannaschii.</title>
        <authorList>
            <person name="Bult C.J."/>
            <person name="White O."/>
            <person name="Olsen G.J."/>
            <person name="Zhou L."/>
            <person name="Fleischmann R.D."/>
            <person name="Sutton G.G."/>
            <person name="Blake J.A."/>
            <person name="FitzGerald L.M."/>
            <person name="Clayton R.A."/>
            <person name="Gocayne J.D."/>
            <person name="Kerlavage A.R."/>
            <person name="Dougherty B.A."/>
            <person name="Tomb J.-F."/>
            <person name="Adams M.D."/>
            <person name="Reich C.I."/>
            <person name="Overbeek R."/>
            <person name="Kirkness E.F."/>
            <person name="Weinstock K.G."/>
            <person name="Merrick J.M."/>
            <person name="Glodek A."/>
            <person name="Scott J.L."/>
            <person name="Geoghagen N.S.M."/>
            <person name="Weidman J.F."/>
            <person name="Fuhrmann J.L."/>
            <person name="Nguyen D."/>
            <person name="Utterback T.R."/>
            <person name="Kelley J.M."/>
            <person name="Peterson J.D."/>
            <person name="Sadow P.W."/>
            <person name="Hanna M.C."/>
            <person name="Cotton M.D."/>
            <person name="Roberts K.M."/>
            <person name="Hurst M.A."/>
            <person name="Kaine B.P."/>
            <person name="Borodovsky M."/>
            <person name="Klenk H.-P."/>
            <person name="Fraser C.M."/>
            <person name="Smith H.O."/>
            <person name="Woese C.R."/>
            <person name="Venter J.C."/>
        </authorList>
    </citation>
    <scope>NUCLEOTIDE SEQUENCE [LARGE SCALE GENOMIC DNA]</scope>
    <source>
        <strain>ATCC 43067 / DSM 2661 / JAL-1 / JCM 10045 / NBRC 100440</strain>
    </source>
</reference>
<protein>
    <recommendedName>
        <fullName>Uncharacterized protein MJ0144</fullName>
    </recommendedName>
</protein>
<gene>
    <name type="ordered locus">MJ0144</name>
</gene>
<sequence length="258" mass="29754">MNKKIEELNKLDKKVVLAPMAGITDGDFCRKFKDLFAIVTIGGYNLDSATYKASRDIEKRGRKEFSINLEEFNSYIIEQIKKARESNALVSVNVRFVDIDEAYDKLLTIAKHADIIELNCHCRQPEITSLGIGQELMKNKNLLKEFLTKMKELNKPIFLKIRLNCIPLKELIDNLNYVRDYFDGLHVDCFYPGKPYADMDSLKILAEEFNDKIIIGNNSIDSIEKAKEMLKYSDFVSVARTILKGNVEWIKELNKENI</sequence>
<dbReference type="EMBL" id="L77117">
    <property type="protein sequence ID" value="AAB98127.1"/>
    <property type="molecule type" value="Genomic_DNA"/>
</dbReference>
<dbReference type="PIR" id="A64318">
    <property type="entry name" value="A64318"/>
</dbReference>
<dbReference type="RefSeq" id="WP_010869639.1">
    <property type="nucleotide sequence ID" value="NC_000909.1"/>
</dbReference>
<dbReference type="SMR" id="Q57608"/>
<dbReference type="STRING" id="243232.MJ_0144"/>
<dbReference type="PaxDb" id="243232-MJ_0144"/>
<dbReference type="EnsemblBacteria" id="AAB98127">
    <property type="protein sequence ID" value="AAB98127"/>
    <property type="gene ID" value="MJ_0144"/>
</dbReference>
<dbReference type="GeneID" id="1450988"/>
<dbReference type="KEGG" id="mja:MJ_0144"/>
<dbReference type="eggNOG" id="arCOG00605">
    <property type="taxonomic scope" value="Archaea"/>
</dbReference>
<dbReference type="HOGENOM" id="CLU_1118194_0_0_2"/>
<dbReference type="InParanoid" id="Q57608"/>
<dbReference type="OrthoDB" id="145053at2157"/>
<dbReference type="PhylomeDB" id="Q57608"/>
<dbReference type="Proteomes" id="UP000000805">
    <property type="component" value="Chromosome"/>
</dbReference>
<dbReference type="CDD" id="cd02911">
    <property type="entry name" value="arch_FMN"/>
    <property type="match status" value="1"/>
</dbReference>
<dbReference type="Gene3D" id="3.20.20.70">
    <property type="entry name" value="Aldolase class I"/>
    <property type="match status" value="1"/>
</dbReference>
<dbReference type="InterPro" id="IPR013785">
    <property type="entry name" value="Aldolase_TIM"/>
</dbReference>
<dbReference type="InterPro" id="IPR035587">
    <property type="entry name" value="DUS-like_FMN-bd"/>
</dbReference>
<dbReference type="InterPro" id="IPR037347">
    <property type="entry name" value="MJ0144_FMN"/>
</dbReference>
<dbReference type="InterPro" id="IPR005270">
    <property type="entry name" value="tRNA_dU_NifR3-rel"/>
</dbReference>
<dbReference type="NCBIfam" id="TIGR00736">
    <property type="entry name" value="nifR3_rel_arch"/>
    <property type="match status" value="1"/>
</dbReference>
<dbReference type="PANTHER" id="PTHR11082:SF36">
    <property type="entry name" value="DUS-LIKE FMN-BINDING DOMAIN-CONTAINING PROTEIN"/>
    <property type="match status" value="1"/>
</dbReference>
<dbReference type="PANTHER" id="PTHR11082">
    <property type="entry name" value="TRNA-DIHYDROURIDINE SYNTHASE"/>
    <property type="match status" value="1"/>
</dbReference>
<dbReference type="Pfam" id="PF01207">
    <property type="entry name" value="Dus"/>
    <property type="match status" value="1"/>
</dbReference>
<dbReference type="SUPFAM" id="SSF51395">
    <property type="entry name" value="FMN-linked oxidoreductases"/>
    <property type="match status" value="1"/>
</dbReference>
<proteinExistence type="predicted"/>
<keyword id="KW-1185">Reference proteome</keyword>
<accession>Q57608</accession>
<name>Y144_METJA</name>